<proteinExistence type="evidence at protein level"/>
<comment type="function">
    <text evidence="1">Participates in electron transfer between P700 and the cytochrome b6-f complex in photosystem I.</text>
</comment>
<comment type="cofactor">
    <cofactor evidence="2">
        <name>Cu(2+)</name>
        <dbReference type="ChEBI" id="CHEBI:29036"/>
    </cofactor>
</comment>
<comment type="subcellular location">
    <subcellularLocation>
        <location evidence="2">Cellular thylakoid membrane</location>
        <topology evidence="2">Peripheral membrane protein</topology>
        <orientation evidence="2">Lumenal side</orientation>
    </subcellularLocation>
    <text>Loosely bound to the thylakoid inner membrane surface (PubMed:8679527).</text>
</comment>
<comment type="similarity">
    <text evidence="1">Belongs to the plastocyanin family.</text>
</comment>
<name>PLAS_ANAVA</name>
<protein>
    <recommendedName>
        <fullName>Plastocyanin</fullName>
    </recommendedName>
</protein>
<sequence length="105" mass="11104">ETYTVKLGSDKGLLVFEPAKLTIKPGDTVEFLNNKVPPHNVVFDAALNPAKSADLAKSLSHKQLLMSPGQSTSTTFPADAPAGEYTFYCEPHRGAGMVGKITVAG</sequence>
<accession>P0C178</accession>
<accession>P00301</accession>
<accession>P14114</accession>
<evidence type="ECO:0000255" key="1">
    <source>
        <dbReference type="HAMAP-Rule" id="MF_00566"/>
    </source>
</evidence>
<evidence type="ECO:0000269" key="2">
    <source>
    </source>
</evidence>
<evidence type="ECO:0007744" key="3">
    <source>
        <dbReference type="PDB" id="1NIN"/>
    </source>
</evidence>
<evidence type="ECO:0007829" key="4">
    <source>
        <dbReference type="PDB" id="1NIN"/>
    </source>
</evidence>
<evidence type="ECO:0007829" key="5">
    <source>
        <dbReference type="PDB" id="2GIM"/>
    </source>
</evidence>
<feature type="chain" id="PRO_0000228715" description="Plastocyanin">
    <location>
        <begin position="1"/>
        <end position="105"/>
    </location>
</feature>
<feature type="domain" description="Plastocyanin-like">
    <location>
        <begin position="1"/>
        <end position="105"/>
    </location>
</feature>
<feature type="binding site" evidence="2 3">
    <location>
        <position position="39"/>
    </location>
    <ligand>
        <name>Cu(2+)</name>
        <dbReference type="ChEBI" id="CHEBI:29036"/>
    </ligand>
</feature>
<feature type="binding site" evidence="2 3">
    <location>
        <position position="89"/>
    </location>
    <ligand>
        <name>Cu(2+)</name>
        <dbReference type="ChEBI" id="CHEBI:29036"/>
    </ligand>
</feature>
<feature type="binding site" evidence="2 3">
    <location>
        <position position="92"/>
    </location>
    <ligand>
        <name>Cu(2+)</name>
        <dbReference type="ChEBI" id="CHEBI:29036"/>
    </ligand>
</feature>
<feature type="binding site" evidence="2 3">
    <location>
        <position position="97"/>
    </location>
    <ligand>
        <name>Cu(2+)</name>
        <dbReference type="ChEBI" id="CHEBI:29036"/>
    </ligand>
</feature>
<feature type="strand" evidence="5">
    <location>
        <begin position="2"/>
        <end position="8"/>
    </location>
</feature>
<feature type="strand" evidence="4">
    <location>
        <begin position="10"/>
        <end position="12"/>
    </location>
</feature>
<feature type="strand" evidence="5">
    <location>
        <begin position="14"/>
        <end position="23"/>
    </location>
</feature>
<feature type="strand" evidence="5">
    <location>
        <begin position="28"/>
        <end position="33"/>
    </location>
</feature>
<feature type="strand" evidence="5">
    <location>
        <begin position="35"/>
        <end position="37"/>
    </location>
</feature>
<feature type="strand" evidence="5">
    <location>
        <begin position="41"/>
        <end position="43"/>
    </location>
</feature>
<feature type="strand" evidence="5">
    <location>
        <begin position="45"/>
        <end position="48"/>
    </location>
</feature>
<feature type="helix" evidence="5">
    <location>
        <begin position="53"/>
        <end position="59"/>
    </location>
</feature>
<feature type="strand" evidence="5">
    <location>
        <begin position="71"/>
        <end position="75"/>
    </location>
</feature>
<feature type="strand" evidence="5">
    <location>
        <begin position="82"/>
        <end position="88"/>
    </location>
</feature>
<feature type="turn" evidence="5">
    <location>
        <begin position="90"/>
        <end position="92"/>
    </location>
</feature>
<feature type="helix" evidence="5">
    <location>
        <begin position="93"/>
        <end position="95"/>
    </location>
</feature>
<feature type="strand" evidence="5">
    <location>
        <begin position="98"/>
        <end position="103"/>
    </location>
</feature>
<reference key="1">
    <citation type="journal article" date="1996" name="Biochemistry">
        <title>Solution structure of reduced plastocyanin from the blue-green alga Anabaena variabilis.</title>
        <authorList>
            <person name="Badsberg U."/>
            <person name="Joergensen A.M."/>
            <person name="Gesmar H."/>
            <person name="Led J.L."/>
            <person name="Hammerstad J.M."/>
            <person name="Jespersoen L.-L."/>
            <person name="Ulstrup J."/>
        </authorList>
    </citation>
    <scope>STRUCTURE BY NMR IN COMPLEX WITH COPPER</scope>
    <scope>COFACTOR</scope>
    <scope>SUBCELLULAR LOCATION</scope>
    <source>
        <strain>PCC 7118 / ATCC 27892</strain>
    </source>
</reference>
<dbReference type="PDB" id="1NIN">
    <property type="method" value="NMR"/>
    <property type="chains" value="A=1-105"/>
</dbReference>
<dbReference type="PDB" id="2GIM">
    <property type="method" value="X-ray"/>
    <property type="resolution" value="1.60 A"/>
    <property type="chains" value="A/C=1-105"/>
</dbReference>
<dbReference type="PDBsum" id="1NIN"/>
<dbReference type="PDBsum" id="2GIM"/>
<dbReference type="BMRB" id="P0C178"/>
<dbReference type="SMR" id="P0C178"/>
<dbReference type="EvolutionaryTrace" id="P0C178"/>
<dbReference type="GO" id="GO:0031676">
    <property type="term" value="C:plasma membrane-derived thylakoid membrane"/>
    <property type="evidence" value="ECO:0007669"/>
    <property type="project" value="UniProtKB-SubCell"/>
</dbReference>
<dbReference type="GO" id="GO:0005507">
    <property type="term" value="F:copper ion binding"/>
    <property type="evidence" value="ECO:0007669"/>
    <property type="project" value="UniProtKB-UniRule"/>
</dbReference>
<dbReference type="GO" id="GO:0009055">
    <property type="term" value="F:electron transfer activity"/>
    <property type="evidence" value="ECO:0007669"/>
    <property type="project" value="UniProtKB-UniRule"/>
</dbReference>
<dbReference type="CDD" id="cd04219">
    <property type="entry name" value="Plastocyanin"/>
    <property type="match status" value="1"/>
</dbReference>
<dbReference type="Gene3D" id="2.60.40.420">
    <property type="entry name" value="Cupredoxins - blue copper proteins"/>
    <property type="match status" value="1"/>
</dbReference>
<dbReference type="HAMAP" id="MF_00566">
    <property type="entry name" value="Cytb6_f_plastocyanin"/>
    <property type="match status" value="1"/>
</dbReference>
<dbReference type="InterPro" id="IPR000923">
    <property type="entry name" value="BlueCu_1"/>
</dbReference>
<dbReference type="InterPro" id="IPR028871">
    <property type="entry name" value="BlueCu_1_BS"/>
</dbReference>
<dbReference type="InterPro" id="IPR001235">
    <property type="entry name" value="Copper_blue_Plastocyanin"/>
</dbReference>
<dbReference type="InterPro" id="IPR008972">
    <property type="entry name" value="Cupredoxin"/>
</dbReference>
<dbReference type="InterPro" id="IPR002387">
    <property type="entry name" value="Plastocyanin"/>
</dbReference>
<dbReference type="InterPro" id="IPR023511">
    <property type="entry name" value="Plastocyanin_cyanobac"/>
</dbReference>
<dbReference type="NCBIfam" id="TIGR02656">
    <property type="entry name" value="cyanin_plasto"/>
    <property type="match status" value="1"/>
</dbReference>
<dbReference type="PANTHER" id="PTHR34192">
    <property type="entry name" value="PLASTOCYANIN MAJOR ISOFORM, CHLOROPLASTIC-RELATED"/>
    <property type="match status" value="1"/>
</dbReference>
<dbReference type="PANTHER" id="PTHR34192:SF10">
    <property type="entry name" value="PLASTOCYANIN MAJOR ISOFORM, CHLOROPLASTIC-RELATED"/>
    <property type="match status" value="1"/>
</dbReference>
<dbReference type="Pfam" id="PF00127">
    <property type="entry name" value="Copper-bind"/>
    <property type="match status" value="1"/>
</dbReference>
<dbReference type="PRINTS" id="PR00156">
    <property type="entry name" value="COPPERBLUE"/>
</dbReference>
<dbReference type="PRINTS" id="PR00157">
    <property type="entry name" value="PLASTOCYANIN"/>
</dbReference>
<dbReference type="SUPFAM" id="SSF49503">
    <property type="entry name" value="Cupredoxins"/>
    <property type="match status" value="1"/>
</dbReference>
<dbReference type="PROSITE" id="PS00196">
    <property type="entry name" value="COPPER_BLUE"/>
    <property type="match status" value="1"/>
</dbReference>
<gene>
    <name type="primary">petE</name>
</gene>
<keyword id="KW-0002">3D-structure</keyword>
<keyword id="KW-0186">Copper</keyword>
<keyword id="KW-0249">Electron transport</keyword>
<keyword id="KW-0472">Membrane</keyword>
<keyword id="KW-0479">Metal-binding</keyword>
<keyword id="KW-0793">Thylakoid</keyword>
<keyword id="KW-0813">Transport</keyword>
<organism>
    <name type="scientific">Anabaena variabilis</name>
    <dbReference type="NCBI Taxonomy" id="264691"/>
    <lineage>
        <taxon>Bacteria</taxon>
        <taxon>Bacillati</taxon>
        <taxon>Cyanobacteriota</taxon>
        <taxon>Cyanophyceae</taxon>
        <taxon>Nostocales</taxon>
        <taxon>Nostocaceae</taxon>
        <taxon>Trichormus</taxon>
    </lineage>
</organism>